<reference key="1">
    <citation type="submission" date="1996-04" db="EMBL/GenBank/DDBJ databases">
        <authorList>
            <person name="Desgagnes R."/>
            <person name="Gagnon G."/>
            <person name="Frenette M."/>
        </authorList>
    </citation>
    <scope>NUCLEOTIDE SEQUENCE [GENOMIC DNA]</scope>
    <source>
        <strain>ATCC 25975</strain>
    </source>
</reference>
<protein>
    <recommendedName>
        <fullName>Isocitrate dehydrogenase [NADP]</fullName>
        <shortName>IDH</shortName>
        <ecNumber evidence="1">1.1.1.42</ecNumber>
    </recommendedName>
    <alternativeName>
        <fullName>IDP</fullName>
    </alternativeName>
    <alternativeName>
        <fullName>NADP(+)-specific ICDH</fullName>
    </alternativeName>
    <alternativeName>
        <fullName>Oxalosuccinate decarboxylase</fullName>
    </alternativeName>
</protein>
<gene>
    <name type="primary">icd</name>
</gene>
<proteinExistence type="inferred from homology"/>
<keyword id="KW-0329">Glyoxylate bypass</keyword>
<keyword id="KW-0460">Magnesium</keyword>
<keyword id="KW-0464">Manganese</keyword>
<keyword id="KW-0479">Metal-binding</keyword>
<keyword id="KW-0521">NADP</keyword>
<keyword id="KW-0560">Oxidoreductase</keyword>
<keyword id="KW-0816">Tricarboxylic acid cycle</keyword>
<organism>
    <name type="scientific">Streptococcus salivarius</name>
    <dbReference type="NCBI Taxonomy" id="1304"/>
    <lineage>
        <taxon>Bacteria</taxon>
        <taxon>Bacillati</taxon>
        <taxon>Bacillota</taxon>
        <taxon>Bacilli</taxon>
        <taxon>Lactobacillales</taxon>
        <taxon>Streptococcaceae</taxon>
        <taxon>Streptococcus</taxon>
    </lineage>
</organism>
<name>IDH_STRSL</name>
<comment type="function">
    <text evidence="1">Catalyzes the oxidative decarboxylation of isocitrate to 2-oxoglutarate and carbon dioxide with the concomitant reduction of NADP(+).</text>
</comment>
<comment type="catalytic activity">
    <reaction evidence="1">
        <text>D-threo-isocitrate + NADP(+) = 2-oxoglutarate + CO2 + NADPH</text>
        <dbReference type="Rhea" id="RHEA:19629"/>
        <dbReference type="ChEBI" id="CHEBI:15562"/>
        <dbReference type="ChEBI" id="CHEBI:16526"/>
        <dbReference type="ChEBI" id="CHEBI:16810"/>
        <dbReference type="ChEBI" id="CHEBI:57783"/>
        <dbReference type="ChEBI" id="CHEBI:58349"/>
        <dbReference type="EC" id="1.1.1.42"/>
    </reaction>
</comment>
<comment type="cofactor">
    <cofactor evidence="1">
        <name>Mg(2+)</name>
        <dbReference type="ChEBI" id="CHEBI:18420"/>
    </cofactor>
    <cofactor evidence="1">
        <name>Mn(2+)</name>
        <dbReference type="ChEBI" id="CHEBI:29035"/>
    </cofactor>
    <text evidence="1">Binds 1 Mg(2+) or Mn(2+) ion per subunit.</text>
</comment>
<comment type="subunit">
    <text evidence="1">Homodimer.</text>
</comment>
<comment type="similarity">
    <text evidence="2">Belongs to the isocitrate and isopropylmalate dehydrogenases family.</text>
</comment>
<sequence length="391" mass="43201">MAEKIVMKNGQLQVSDRPIIPFIEGDGVGHDIWKNAQAIFDKAVEVAYEGKRHIEWQELLAGKKAYDKTGEWLPKETLEAIRESLVAIKGPLETPVGGGIRSLNVALRQELDLYACVRPVRYFDGVASPLKEPEKTNITIFRENTEDIYAGIEWEAGTADVKRVIEFLQTEMNVNKIRFPESSSIGIKPISIEGSKRLIRSAIDYALKNNLKKVTLVHKGNIQKFTEGGFRKWGYEVAQEDYKEELLAGRLEINDIIADNFLQQILLNPEKFDVVALTNLNGDYASDALAAQVGGIGISPGANINYQTGHAIFEATHGTAPDIADQDKANPCSVLLSGCMLLDYIGWTEAAQLITSAIEKTFKADIFTADLAFGKQAYSTSAFSNQILSIM</sequence>
<accession>Q59985</accession>
<evidence type="ECO:0000250" key="1">
    <source>
        <dbReference type="UniProtKB" id="P08200"/>
    </source>
</evidence>
<evidence type="ECO:0000305" key="2"/>
<dbReference type="EC" id="1.1.1.42" evidence="1"/>
<dbReference type="EMBL" id="L14780">
    <property type="protein sequence ID" value="AAA98355.1"/>
    <property type="molecule type" value="Genomic_DNA"/>
</dbReference>
<dbReference type="RefSeq" id="WP_045768878.1">
    <property type="nucleotide sequence ID" value="NZ_WMYH01000035.1"/>
</dbReference>
<dbReference type="SMR" id="Q59985"/>
<dbReference type="STRING" id="1304.HMPREF3219_0201231"/>
<dbReference type="GO" id="GO:0004450">
    <property type="term" value="F:isocitrate dehydrogenase (NADP+) activity"/>
    <property type="evidence" value="ECO:0007669"/>
    <property type="project" value="UniProtKB-EC"/>
</dbReference>
<dbReference type="GO" id="GO:0000287">
    <property type="term" value="F:magnesium ion binding"/>
    <property type="evidence" value="ECO:0007669"/>
    <property type="project" value="InterPro"/>
</dbReference>
<dbReference type="GO" id="GO:0051287">
    <property type="term" value="F:NAD binding"/>
    <property type="evidence" value="ECO:0007669"/>
    <property type="project" value="InterPro"/>
</dbReference>
<dbReference type="GO" id="GO:0006097">
    <property type="term" value="P:glyoxylate cycle"/>
    <property type="evidence" value="ECO:0007669"/>
    <property type="project" value="UniProtKB-KW"/>
</dbReference>
<dbReference type="GO" id="GO:0006099">
    <property type="term" value="P:tricarboxylic acid cycle"/>
    <property type="evidence" value="ECO:0007669"/>
    <property type="project" value="UniProtKB-KW"/>
</dbReference>
<dbReference type="Gene3D" id="3.40.718.10">
    <property type="entry name" value="Isopropylmalate Dehydrogenase"/>
    <property type="match status" value="1"/>
</dbReference>
<dbReference type="InterPro" id="IPR019818">
    <property type="entry name" value="IsoCit/isopropylmalate_DH_CS"/>
</dbReference>
<dbReference type="InterPro" id="IPR004439">
    <property type="entry name" value="Isocitrate_DH_NADP_dimer_prok"/>
</dbReference>
<dbReference type="InterPro" id="IPR024084">
    <property type="entry name" value="IsoPropMal-DH-like_dom"/>
</dbReference>
<dbReference type="NCBIfam" id="NF005425">
    <property type="entry name" value="PRK07006.1"/>
    <property type="match status" value="1"/>
</dbReference>
<dbReference type="PANTHER" id="PTHR43504">
    <property type="entry name" value="ISOCITRATE DEHYDROGENASE [NADP]"/>
    <property type="match status" value="1"/>
</dbReference>
<dbReference type="PANTHER" id="PTHR43504:SF1">
    <property type="entry name" value="ISOCITRATE DEHYDROGENASE [NADP]"/>
    <property type="match status" value="1"/>
</dbReference>
<dbReference type="Pfam" id="PF00180">
    <property type="entry name" value="Iso_dh"/>
    <property type="match status" value="1"/>
</dbReference>
<dbReference type="SMART" id="SM01329">
    <property type="entry name" value="Iso_dh"/>
    <property type="match status" value="1"/>
</dbReference>
<dbReference type="SUPFAM" id="SSF53659">
    <property type="entry name" value="Isocitrate/Isopropylmalate dehydrogenase-like"/>
    <property type="match status" value="1"/>
</dbReference>
<dbReference type="PROSITE" id="PS00470">
    <property type="entry name" value="IDH_IMDH"/>
    <property type="match status" value="1"/>
</dbReference>
<feature type="chain" id="PRO_0000083569" description="Isocitrate dehydrogenase [NADP]">
    <location>
        <begin position="1"/>
        <end position="391"/>
    </location>
</feature>
<feature type="binding site" evidence="1">
    <location>
        <position position="102"/>
    </location>
    <ligand>
        <name>D-threo-isocitrate</name>
        <dbReference type="ChEBI" id="CHEBI:15562"/>
    </ligand>
</feature>
<feature type="binding site" evidence="1">
    <location>
        <position position="104"/>
    </location>
    <ligand>
        <name>D-threo-isocitrate</name>
        <dbReference type="ChEBI" id="CHEBI:15562"/>
    </ligand>
</feature>
<feature type="binding site" evidence="1">
    <location>
        <position position="108"/>
    </location>
    <ligand>
        <name>D-threo-isocitrate</name>
        <dbReference type="ChEBI" id="CHEBI:15562"/>
    </ligand>
</feature>
<feature type="binding site" evidence="1">
    <location>
        <position position="118"/>
    </location>
    <ligand>
        <name>D-threo-isocitrate</name>
        <dbReference type="ChEBI" id="CHEBI:15562"/>
    </ligand>
</feature>
<feature type="binding site" evidence="1">
    <location>
        <position position="142"/>
    </location>
    <ligand>
        <name>D-threo-isocitrate</name>
        <dbReference type="ChEBI" id="CHEBI:15562"/>
    </ligand>
</feature>
<feature type="binding site" evidence="1">
    <location>
        <position position="283"/>
    </location>
    <ligand>
        <name>Mg(2+)</name>
        <dbReference type="ChEBI" id="CHEBI:18420"/>
    </ligand>
</feature>
<feature type="site" description="Critical for catalysis" evidence="1">
    <location>
        <position position="149"/>
    </location>
</feature>
<feature type="site" description="Critical for catalysis" evidence="1">
    <location>
        <position position="219"/>
    </location>
</feature>